<accession>A8GZ99</accession>
<sequence>MRLKQDFFEQLPEFYSQVFPLGISNPHWLAWSQDAADLIEIKQPSDELLQGLSGNAHVDGASYYAQVYSGHQFGGYSPQLGDGRSIILGEALGPQGAWDVALKGAGPTPYSRHGDGRAVMRSAVREFLISEALHHLHIPTTRALAVIGSDLPVWRESQETAAITVRLAKSHIRFGHFEYFCHSERGAPAKLKQLLDFTIKQHYPDLSCDAVGYKAWFTRVVADTAKMIANWQAIGFAHGVMNTDNMSILGDTFDFGPFAFLDTFKEGFICNHSDPEGRYAFGQQPGIGLWNLQRLAQALSPIIASDDLIESLNQYQVELVKHYLLLMRGKLGLKTSAAEAEQDDHDLALIGAFTGLMERNQLDHTNTWRRFGQLDPNASHSSLRDDFVDLHGFDTWYQAYQVRLGSVDEVGLWQKERNQVNPKYILRNYLAQEAIIAVELGDLKPLHNLQRLLQNPFDEQLEFEDMAKRPPDWGQGLIMSCSS</sequence>
<gene>
    <name evidence="1" type="primary">ydiU</name>
    <name evidence="1" type="synonym">selO</name>
    <name type="ordered locus">Spea_0308</name>
</gene>
<dbReference type="EC" id="2.7.7.-" evidence="1"/>
<dbReference type="EC" id="2.7.7.108" evidence="1"/>
<dbReference type="EMBL" id="CP000851">
    <property type="protein sequence ID" value="ABV85636.1"/>
    <property type="molecule type" value="Genomic_DNA"/>
</dbReference>
<dbReference type="RefSeq" id="WP_012153577.1">
    <property type="nucleotide sequence ID" value="NC_009901.1"/>
</dbReference>
<dbReference type="SMR" id="A8GZ99"/>
<dbReference type="STRING" id="398579.Spea_0308"/>
<dbReference type="KEGG" id="spl:Spea_0308"/>
<dbReference type="eggNOG" id="COG0397">
    <property type="taxonomic scope" value="Bacteria"/>
</dbReference>
<dbReference type="HOGENOM" id="CLU_010245_4_0_6"/>
<dbReference type="OrthoDB" id="9776281at2"/>
<dbReference type="Proteomes" id="UP000002608">
    <property type="component" value="Chromosome"/>
</dbReference>
<dbReference type="GO" id="GO:0070733">
    <property type="term" value="F:AMPylase activity"/>
    <property type="evidence" value="ECO:0007669"/>
    <property type="project" value="TreeGrafter"/>
</dbReference>
<dbReference type="GO" id="GO:0005524">
    <property type="term" value="F:ATP binding"/>
    <property type="evidence" value="ECO:0007669"/>
    <property type="project" value="UniProtKB-UniRule"/>
</dbReference>
<dbReference type="GO" id="GO:0000287">
    <property type="term" value="F:magnesium ion binding"/>
    <property type="evidence" value="ECO:0007669"/>
    <property type="project" value="UniProtKB-UniRule"/>
</dbReference>
<dbReference type="HAMAP" id="MF_00692">
    <property type="entry name" value="YdiU_SelO"/>
    <property type="match status" value="1"/>
</dbReference>
<dbReference type="InterPro" id="IPR003846">
    <property type="entry name" value="SelO"/>
</dbReference>
<dbReference type="NCBIfam" id="NF000658">
    <property type="entry name" value="PRK00029.1"/>
    <property type="match status" value="1"/>
</dbReference>
<dbReference type="PANTHER" id="PTHR32057">
    <property type="entry name" value="PROTEIN ADENYLYLTRANSFERASE SELO, MITOCHONDRIAL"/>
    <property type="match status" value="1"/>
</dbReference>
<dbReference type="PANTHER" id="PTHR32057:SF14">
    <property type="entry name" value="PROTEIN ADENYLYLTRANSFERASE SELO, MITOCHONDRIAL"/>
    <property type="match status" value="1"/>
</dbReference>
<dbReference type="Pfam" id="PF02696">
    <property type="entry name" value="SelO"/>
    <property type="match status" value="1"/>
</dbReference>
<proteinExistence type="inferred from homology"/>
<name>SELO_SHEPA</name>
<reference key="1">
    <citation type="submission" date="2007-10" db="EMBL/GenBank/DDBJ databases">
        <title>Complete sequence of Shewanella pealeana ATCC 700345.</title>
        <authorList>
            <consortium name="US DOE Joint Genome Institute"/>
            <person name="Copeland A."/>
            <person name="Lucas S."/>
            <person name="Lapidus A."/>
            <person name="Barry K."/>
            <person name="Glavina del Rio T."/>
            <person name="Dalin E."/>
            <person name="Tice H."/>
            <person name="Pitluck S."/>
            <person name="Chertkov O."/>
            <person name="Brettin T."/>
            <person name="Bruce D."/>
            <person name="Detter J.C."/>
            <person name="Han C."/>
            <person name="Schmutz J."/>
            <person name="Larimer F."/>
            <person name="Land M."/>
            <person name="Hauser L."/>
            <person name="Kyrpides N."/>
            <person name="Kim E."/>
            <person name="Zhao J.-S.Z."/>
            <person name="Manno D."/>
            <person name="Hawari J."/>
            <person name="Richardson P."/>
        </authorList>
    </citation>
    <scope>NUCLEOTIDE SEQUENCE [LARGE SCALE GENOMIC DNA]</scope>
    <source>
        <strain>ATCC 700345 / ANG-SQ1</strain>
    </source>
</reference>
<comment type="function">
    <text evidence="1">Nucleotidyltransferase involved in the post-translational modification of proteins. It can catalyze the addition of adenosine monophosphate (AMP) or uridine monophosphate (UMP) to a protein, resulting in modifications known as AMPylation and UMPylation.</text>
</comment>
<comment type="catalytic activity">
    <reaction evidence="1">
        <text>L-seryl-[protein] + ATP = 3-O-(5'-adenylyl)-L-seryl-[protein] + diphosphate</text>
        <dbReference type="Rhea" id="RHEA:58120"/>
        <dbReference type="Rhea" id="RHEA-COMP:9863"/>
        <dbReference type="Rhea" id="RHEA-COMP:15073"/>
        <dbReference type="ChEBI" id="CHEBI:29999"/>
        <dbReference type="ChEBI" id="CHEBI:30616"/>
        <dbReference type="ChEBI" id="CHEBI:33019"/>
        <dbReference type="ChEBI" id="CHEBI:142516"/>
        <dbReference type="EC" id="2.7.7.108"/>
    </reaction>
</comment>
<comment type="catalytic activity">
    <reaction evidence="1">
        <text>L-threonyl-[protein] + ATP = 3-O-(5'-adenylyl)-L-threonyl-[protein] + diphosphate</text>
        <dbReference type="Rhea" id="RHEA:54292"/>
        <dbReference type="Rhea" id="RHEA-COMP:11060"/>
        <dbReference type="Rhea" id="RHEA-COMP:13847"/>
        <dbReference type="ChEBI" id="CHEBI:30013"/>
        <dbReference type="ChEBI" id="CHEBI:30616"/>
        <dbReference type="ChEBI" id="CHEBI:33019"/>
        <dbReference type="ChEBI" id="CHEBI:138113"/>
        <dbReference type="EC" id="2.7.7.108"/>
    </reaction>
</comment>
<comment type="catalytic activity">
    <reaction evidence="1">
        <text>L-tyrosyl-[protein] + ATP = O-(5'-adenylyl)-L-tyrosyl-[protein] + diphosphate</text>
        <dbReference type="Rhea" id="RHEA:54288"/>
        <dbReference type="Rhea" id="RHEA-COMP:10136"/>
        <dbReference type="Rhea" id="RHEA-COMP:13846"/>
        <dbReference type="ChEBI" id="CHEBI:30616"/>
        <dbReference type="ChEBI" id="CHEBI:33019"/>
        <dbReference type="ChEBI" id="CHEBI:46858"/>
        <dbReference type="ChEBI" id="CHEBI:83624"/>
        <dbReference type="EC" id="2.7.7.108"/>
    </reaction>
</comment>
<comment type="catalytic activity">
    <reaction evidence="1">
        <text>L-histidyl-[protein] + UTP = N(tele)-(5'-uridylyl)-L-histidyl-[protein] + diphosphate</text>
        <dbReference type="Rhea" id="RHEA:83891"/>
        <dbReference type="Rhea" id="RHEA-COMP:9745"/>
        <dbReference type="Rhea" id="RHEA-COMP:20239"/>
        <dbReference type="ChEBI" id="CHEBI:29979"/>
        <dbReference type="ChEBI" id="CHEBI:33019"/>
        <dbReference type="ChEBI" id="CHEBI:46398"/>
        <dbReference type="ChEBI" id="CHEBI:233474"/>
    </reaction>
</comment>
<comment type="catalytic activity">
    <reaction evidence="1">
        <text>L-seryl-[protein] + UTP = O-(5'-uridylyl)-L-seryl-[protein] + diphosphate</text>
        <dbReference type="Rhea" id="RHEA:64604"/>
        <dbReference type="Rhea" id="RHEA-COMP:9863"/>
        <dbReference type="Rhea" id="RHEA-COMP:16635"/>
        <dbReference type="ChEBI" id="CHEBI:29999"/>
        <dbReference type="ChEBI" id="CHEBI:33019"/>
        <dbReference type="ChEBI" id="CHEBI:46398"/>
        <dbReference type="ChEBI" id="CHEBI:156051"/>
    </reaction>
</comment>
<comment type="catalytic activity">
    <reaction evidence="1">
        <text>L-tyrosyl-[protein] + UTP = O-(5'-uridylyl)-L-tyrosyl-[protein] + diphosphate</text>
        <dbReference type="Rhea" id="RHEA:83887"/>
        <dbReference type="Rhea" id="RHEA-COMP:10136"/>
        <dbReference type="Rhea" id="RHEA-COMP:20238"/>
        <dbReference type="ChEBI" id="CHEBI:33019"/>
        <dbReference type="ChEBI" id="CHEBI:46398"/>
        <dbReference type="ChEBI" id="CHEBI:46858"/>
        <dbReference type="ChEBI" id="CHEBI:90602"/>
    </reaction>
</comment>
<comment type="cofactor">
    <cofactor evidence="1">
        <name>Mg(2+)</name>
        <dbReference type="ChEBI" id="CHEBI:18420"/>
    </cofactor>
    <cofactor evidence="1">
        <name>Mn(2+)</name>
        <dbReference type="ChEBI" id="CHEBI:29035"/>
    </cofactor>
</comment>
<comment type="similarity">
    <text evidence="1">Belongs to the SELO family.</text>
</comment>
<organism>
    <name type="scientific">Shewanella pealeana (strain ATCC 700345 / ANG-SQ1)</name>
    <dbReference type="NCBI Taxonomy" id="398579"/>
    <lineage>
        <taxon>Bacteria</taxon>
        <taxon>Pseudomonadati</taxon>
        <taxon>Pseudomonadota</taxon>
        <taxon>Gammaproteobacteria</taxon>
        <taxon>Alteromonadales</taxon>
        <taxon>Shewanellaceae</taxon>
        <taxon>Shewanella</taxon>
    </lineage>
</organism>
<protein>
    <recommendedName>
        <fullName evidence="1">Protein nucleotidyltransferase YdiU</fullName>
        <ecNumber evidence="1">2.7.7.-</ecNumber>
    </recommendedName>
    <alternativeName>
        <fullName evidence="1">Protein adenylyltransferase YdiU</fullName>
        <ecNumber evidence="1">2.7.7.108</ecNumber>
    </alternativeName>
    <alternativeName>
        <fullName evidence="1">Protein uridylyltransferase YdiU</fullName>
        <ecNumber evidence="1">2.7.7.-</ecNumber>
    </alternativeName>
</protein>
<feature type="chain" id="PRO_1000083139" description="Protein nucleotidyltransferase YdiU">
    <location>
        <begin position="1"/>
        <end position="483"/>
    </location>
</feature>
<feature type="active site" description="Proton acceptor" evidence="1">
    <location>
        <position position="244"/>
    </location>
</feature>
<feature type="binding site" evidence="1">
    <location>
        <position position="81"/>
    </location>
    <ligand>
        <name>ATP</name>
        <dbReference type="ChEBI" id="CHEBI:30616"/>
    </ligand>
</feature>
<feature type="binding site" evidence="1">
    <location>
        <position position="83"/>
    </location>
    <ligand>
        <name>ATP</name>
        <dbReference type="ChEBI" id="CHEBI:30616"/>
    </ligand>
</feature>
<feature type="binding site" evidence="1">
    <location>
        <position position="84"/>
    </location>
    <ligand>
        <name>ATP</name>
        <dbReference type="ChEBI" id="CHEBI:30616"/>
    </ligand>
</feature>
<feature type="binding site" evidence="1">
    <location>
        <position position="103"/>
    </location>
    <ligand>
        <name>ATP</name>
        <dbReference type="ChEBI" id="CHEBI:30616"/>
    </ligand>
</feature>
<feature type="binding site" evidence="1">
    <location>
        <position position="115"/>
    </location>
    <ligand>
        <name>ATP</name>
        <dbReference type="ChEBI" id="CHEBI:30616"/>
    </ligand>
</feature>
<feature type="binding site" evidence="1">
    <location>
        <position position="116"/>
    </location>
    <ligand>
        <name>ATP</name>
        <dbReference type="ChEBI" id="CHEBI:30616"/>
    </ligand>
</feature>
<feature type="binding site" evidence="1">
    <location>
        <position position="166"/>
    </location>
    <ligand>
        <name>ATP</name>
        <dbReference type="ChEBI" id="CHEBI:30616"/>
    </ligand>
</feature>
<feature type="binding site" evidence="1">
    <location>
        <position position="173"/>
    </location>
    <ligand>
        <name>ATP</name>
        <dbReference type="ChEBI" id="CHEBI:30616"/>
    </ligand>
</feature>
<feature type="binding site" evidence="1">
    <location>
        <position position="245"/>
    </location>
    <ligand>
        <name>Mg(2+)</name>
        <dbReference type="ChEBI" id="CHEBI:18420"/>
    </ligand>
</feature>
<feature type="binding site" evidence="1">
    <location>
        <position position="254"/>
    </location>
    <ligand>
        <name>ATP</name>
        <dbReference type="ChEBI" id="CHEBI:30616"/>
    </ligand>
</feature>
<feature type="binding site" evidence="1">
    <location>
        <position position="254"/>
    </location>
    <ligand>
        <name>Mg(2+)</name>
        <dbReference type="ChEBI" id="CHEBI:18420"/>
    </ligand>
</feature>
<evidence type="ECO:0000255" key="1">
    <source>
        <dbReference type="HAMAP-Rule" id="MF_00692"/>
    </source>
</evidence>
<keyword id="KW-0067">ATP-binding</keyword>
<keyword id="KW-0460">Magnesium</keyword>
<keyword id="KW-0464">Manganese</keyword>
<keyword id="KW-0479">Metal-binding</keyword>
<keyword id="KW-0547">Nucleotide-binding</keyword>
<keyword id="KW-0548">Nucleotidyltransferase</keyword>
<keyword id="KW-1185">Reference proteome</keyword>
<keyword id="KW-0808">Transferase</keyword>